<dbReference type="EC" id="2.5.1.3" evidence="1"/>
<dbReference type="EMBL" id="CP000790">
    <property type="protein sequence ID" value="ABU74719.1"/>
    <property type="molecule type" value="Genomic_DNA"/>
</dbReference>
<dbReference type="RefSeq" id="WP_012130199.1">
    <property type="nucleotide sequence ID" value="NC_009784.1"/>
</dbReference>
<dbReference type="SMR" id="A7N7S3"/>
<dbReference type="KEGG" id="vha:VIBHAR_06844"/>
<dbReference type="PATRIC" id="fig|338187.25.peg.3598"/>
<dbReference type="UniPathway" id="UPA00060">
    <property type="reaction ID" value="UER00141"/>
</dbReference>
<dbReference type="Proteomes" id="UP000008152">
    <property type="component" value="Chromosome II"/>
</dbReference>
<dbReference type="GO" id="GO:0005737">
    <property type="term" value="C:cytoplasm"/>
    <property type="evidence" value="ECO:0007669"/>
    <property type="project" value="TreeGrafter"/>
</dbReference>
<dbReference type="GO" id="GO:0000287">
    <property type="term" value="F:magnesium ion binding"/>
    <property type="evidence" value="ECO:0007669"/>
    <property type="project" value="UniProtKB-UniRule"/>
</dbReference>
<dbReference type="GO" id="GO:0004789">
    <property type="term" value="F:thiamine-phosphate diphosphorylase activity"/>
    <property type="evidence" value="ECO:0007669"/>
    <property type="project" value="UniProtKB-UniRule"/>
</dbReference>
<dbReference type="GO" id="GO:0009228">
    <property type="term" value="P:thiamine biosynthetic process"/>
    <property type="evidence" value="ECO:0007669"/>
    <property type="project" value="UniProtKB-KW"/>
</dbReference>
<dbReference type="GO" id="GO:0009229">
    <property type="term" value="P:thiamine diphosphate biosynthetic process"/>
    <property type="evidence" value="ECO:0007669"/>
    <property type="project" value="UniProtKB-UniRule"/>
</dbReference>
<dbReference type="CDD" id="cd00564">
    <property type="entry name" value="TMP_TenI"/>
    <property type="match status" value="1"/>
</dbReference>
<dbReference type="FunFam" id="3.20.20.70:FF:000096">
    <property type="entry name" value="Thiamine-phosphate synthase"/>
    <property type="match status" value="1"/>
</dbReference>
<dbReference type="Gene3D" id="3.20.20.70">
    <property type="entry name" value="Aldolase class I"/>
    <property type="match status" value="1"/>
</dbReference>
<dbReference type="HAMAP" id="MF_00097">
    <property type="entry name" value="TMP_synthase"/>
    <property type="match status" value="1"/>
</dbReference>
<dbReference type="InterPro" id="IPR013785">
    <property type="entry name" value="Aldolase_TIM"/>
</dbReference>
<dbReference type="InterPro" id="IPR036206">
    <property type="entry name" value="ThiamineP_synth_sf"/>
</dbReference>
<dbReference type="InterPro" id="IPR022998">
    <property type="entry name" value="ThiamineP_synth_TenI"/>
</dbReference>
<dbReference type="InterPro" id="IPR034291">
    <property type="entry name" value="TMP_synthase"/>
</dbReference>
<dbReference type="NCBIfam" id="TIGR00693">
    <property type="entry name" value="thiE"/>
    <property type="match status" value="1"/>
</dbReference>
<dbReference type="PANTHER" id="PTHR20857:SF23">
    <property type="entry name" value="THIAMINE BIOSYNTHETIC BIFUNCTIONAL ENZYME"/>
    <property type="match status" value="1"/>
</dbReference>
<dbReference type="PANTHER" id="PTHR20857">
    <property type="entry name" value="THIAMINE-PHOSPHATE PYROPHOSPHORYLASE"/>
    <property type="match status" value="1"/>
</dbReference>
<dbReference type="Pfam" id="PF02581">
    <property type="entry name" value="TMP-TENI"/>
    <property type="match status" value="1"/>
</dbReference>
<dbReference type="SUPFAM" id="SSF51391">
    <property type="entry name" value="Thiamin phosphate synthase"/>
    <property type="match status" value="1"/>
</dbReference>
<name>THIE_VIBC1</name>
<accession>A7N7S3</accession>
<evidence type="ECO:0000255" key="1">
    <source>
        <dbReference type="HAMAP-Rule" id="MF_00097"/>
    </source>
</evidence>
<feature type="chain" id="PRO_1000008185" description="Thiamine-phosphate synthase">
    <location>
        <begin position="1"/>
        <end position="204"/>
    </location>
</feature>
<feature type="binding site" evidence="1">
    <location>
        <begin position="35"/>
        <end position="39"/>
    </location>
    <ligand>
        <name>4-amino-2-methyl-5-(diphosphooxymethyl)pyrimidine</name>
        <dbReference type="ChEBI" id="CHEBI:57841"/>
    </ligand>
</feature>
<feature type="binding site" evidence="1">
    <location>
        <position position="67"/>
    </location>
    <ligand>
        <name>4-amino-2-methyl-5-(diphosphooxymethyl)pyrimidine</name>
        <dbReference type="ChEBI" id="CHEBI:57841"/>
    </ligand>
</feature>
<feature type="binding site" evidence="1">
    <location>
        <position position="68"/>
    </location>
    <ligand>
        <name>Mg(2+)</name>
        <dbReference type="ChEBI" id="CHEBI:18420"/>
    </ligand>
</feature>
<feature type="binding site" evidence="1">
    <location>
        <position position="87"/>
    </location>
    <ligand>
        <name>Mg(2+)</name>
        <dbReference type="ChEBI" id="CHEBI:18420"/>
    </ligand>
</feature>
<feature type="binding site" evidence="1">
    <location>
        <position position="106"/>
    </location>
    <ligand>
        <name>4-amino-2-methyl-5-(diphosphooxymethyl)pyrimidine</name>
        <dbReference type="ChEBI" id="CHEBI:57841"/>
    </ligand>
</feature>
<feature type="binding site" evidence="1">
    <location>
        <begin position="132"/>
        <end position="134"/>
    </location>
    <ligand>
        <name>2-[(2R,5Z)-2-carboxy-4-methylthiazol-5(2H)-ylidene]ethyl phosphate</name>
        <dbReference type="ChEBI" id="CHEBI:62899"/>
    </ligand>
</feature>
<feature type="binding site" evidence="1">
    <location>
        <position position="135"/>
    </location>
    <ligand>
        <name>4-amino-2-methyl-5-(diphosphooxymethyl)pyrimidine</name>
        <dbReference type="ChEBI" id="CHEBI:57841"/>
    </ligand>
</feature>
<feature type="binding site" evidence="1">
    <location>
        <position position="163"/>
    </location>
    <ligand>
        <name>2-[(2R,5Z)-2-carboxy-4-methylthiazol-5(2H)-ylidene]ethyl phosphate</name>
        <dbReference type="ChEBI" id="CHEBI:62899"/>
    </ligand>
</feature>
<feature type="binding site" evidence="1">
    <location>
        <begin position="183"/>
        <end position="184"/>
    </location>
    <ligand>
        <name>2-[(2R,5Z)-2-carboxy-4-methylthiazol-5(2H)-ylidene]ethyl phosphate</name>
        <dbReference type="ChEBI" id="CHEBI:62899"/>
    </ligand>
</feature>
<proteinExistence type="inferred from homology"/>
<gene>
    <name evidence="1" type="primary">thiE</name>
    <name type="ordered locus">VIBHAR_06844</name>
</gene>
<organism>
    <name type="scientific">Vibrio campbellii (strain ATCC BAA-1116)</name>
    <dbReference type="NCBI Taxonomy" id="2902295"/>
    <lineage>
        <taxon>Bacteria</taxon>
        <taxon>Pseudomonadati</taxon>
        <taxon>Pseudomonadota</taxon>
        <taxon>Gammaproteobacteria</taxon>
        <taxon>Vibrionales</taxon>
        <taxon>Vibrionaceae</taxon>
        <taxon>Vibrio</taxon>
    </lineage>
</organism>
<keyword id="KW-0460">Magnesium</keyword>
<keyword id="KW-0479">Metal-binding</keyword>
<keyword id="KW-0784">Thiamine biosynthesis</keyword>
<keyword id="KW-0808">Transferase</keyword>
<comment type="function">
    <text evidence="1">Condenses 4-methyl-5-(beta-hydroxyethyl)thiazole monophosphate (THZ-P) and 2-methyl-4-amino-5-hydroxymethyl pyrimidine pyrophosphate (HMP-PP) to form thiamine monophosphate (TMP).</text>
</comment>
<comment type="catalytic activity">
    <reaction evidence="1">
        <text>2-[(2R,5Z)-2-carboxy-4-methylthiazol-5(2H)-ylidene]ethyl phosphate + 4-amino-2-methyl-5-(diphosphooxymethyl)pyrimidine + 2 H(+) = thiamine phosphate + CO2 + diphosphate</text>
        <dbReference type="Rhea" id="RHEA:47844"/>
        <dbReference type="ChEBI" id="CHEBI:15378"/>
        <dbReference type="ChEBI" id="CHEBI:16526"/>
        <dbReference type="ChEBI" id="CHEBI:33019"/>
        <dbReference type="ChEBI" id="CHEBI:37575"/>
        <dbReference type="ChEBI" id="CHEBI:57841"/>
        <dbReference type="ChEBI" id="CHEBI:62899"/>
        <dbReference type="EC" id="2.5.1.3"/>
    </reaction>
</comment>
<comment type="catalytic activity">
    <reaction evidence="1">
        <text>2-(2-carboxy-4-methylthiazol-5-yl)ethyl phosphate + 4-amino-2-methyl-5-(diphosphooxymethyl)pyrimidine + 2 H(+) = thiamine phosphate + CO2 + diphosphate</text>
        <dbReference type="Rhea" id="RHEA:47848"/>
        <dbReference type="ChEBI" id="CHEBI:15378"/>
        <dbReference type="ChEBI" id="CHEBI:16526"/>
        <dbReference type="ChEBI" id="CHEBI:33019"/>
        <dbReference type="ChEBI" id="CHEBI:37575"/>
        <dbReference type="ChEBI" id="CHEBI:57841"/>
        <dbReference type="ChEBI" id="CHEBI:62890"/>
        <dbReference type="EC" id="2.5.1.3"/>
    </reaction>
</comment>
<comment type="catalytic activity">
    <reaction evidence="1">
        <text>4-methyl-5-(2-phosphooxyethyl)-thiazole + 4-amino-2-methyl-5-(diphosphooxymethyl)pyrimidine + H(+) = thiamine phosphate + diphosphate</text>
        <dbReference type="Rhea" id="RHEA:22328"/>
        <dbReference type="ChEBI" id="CHEBI:15378"/>
        <dbReference type="ChEBI" id="CHEBI:33019"/>
        <dbReference type="ChEBI" id="CHEBI:37575"/>
        <dbReference type="ChEBI" id="CHEBI:57841"/>
        <dbReference type="ChEBI" id="CHEBI:58296"/>
        <dbReference type="EC" id="2.5.1.3"/>
    </reaction>
</comment>
<comment type="cofactor">
    <cofactor evidence="1">
        <name>Mg(2+)</name>
        <dbReference type="ChEBI" id="CHEBI:18420"/>
    </cofactor>
    <text evidence="1">Binds 1 Mg(2+) ion per subunit.</text>
</comment>
<comment type="pathway">
    <text evidence="1">Cofactor biosynthesis; thiamine diphosphate biosynthesis; thiamine phosphate from 4-amino-2-methyl-5-diphosphomethylpyrimidine and 4-methyl-5-(2-phosphoethyl)-thiazole: step 1/1.</text>
</comment>
<comment type="similarity">
    <text evidence="1">Belongs to the thiamine-phosphate synthase family.</text>
</comment>
<reference key="1">
    <citation type="submission" date="2007-08" db="EMBL/GenBank/DDBJ databases">
        <authorList>
            <consortium name="The Vibrio harveyi Genome Sequencing Project"/>
            <person name="Bassler B."/>
            <person name="Clifton S.W."/>
            <person name="Fulton L."/>
            <person name="Delehaunty K."/>
            <person name="Fronick C."/>
            <person name="Harrison M."/>
            <person name="Markivic C."/>
            <person name="Fulton R."/>
            <person name="Tin-Wollam A.-M."/>
            <person name="Shah N."/>
            <person name="Pepin K."/>
            <person name="Nash W."/>
            <person name="Thiruvilangam P."/>
            <person name="Bhonagiri V."/>
            <person name="Waters C."/>
            <person name="Tu K.C."/>
            <person name="Irgon J."/>
            <person name="Wilson R.K."/>
        </authorList>
    </citation>
    <scope>NUCLEOTIDE SEQUENCE [LARGE SCALE GENOMIC DNA]</scope>
    <source>
        <strain>ATCC BAA-1116 / BB120</strain>
    </source>
</reference>
<sequence>MNAYRLYLVTDDQQDLATLKRVVRKAVEGGVTMVQVREKHGDVRAFIERAQAVKDILKDTDVPLIINDRVDVALAVDADGVHLGQSDMPATIARELIGPNKILGLSIENEEQLTEADSLPIDYIGLSAIFATPTKTNTKKHWGIDGLKMALETTSLPIVAIGGINESNIPQLSATGVHGLALVSAICHAEDPKAASEYLLGLMR</sequence>
<protein>
    <recommendedName>
        <fullName evidence="1">Thiamine-phosphate synthase</fullName>
        <shortName evidence="1">TP synthase</shortName>
        <shortName evidence="1">TPS</shortName>
        <ecNumber evidence="1">2.5.1.3</ecNumber>
    </recommendedName>
    <alternativeName>
        <fullName evidence="1">Thiamine-phosphate pyrophosphorylase</fullName>
        <shortName evidence="1">TMP pyrophosphorylase</shortName>
        <shortName evidence="1">TMP-PPase</shortName>
    </alternativeName>
</protein>